<protein>
    <recommendedName>
        <fullName>Putative uncharacterized membrane protein C622.03c</fullName>
    </recommendedName>
</protein>
<sequence>MNPKKSIQLWELQSLLKGATYKKLIEKKTYEAGKERADNYDFLFMSFISFIVSCRLFILVFTFIFKGFPSAIQVIAMIDAVVNALLILIVLAMLFIGSRKLTVEIRRGEVEDFQENLKAREDTFNSSPYQRY</sequence>
<reference key="1">
    <citation type="journal article" date="2002" name="Nature">
        <title>The genome sequence of Schizosaccharomyces pombe.</title>
        <authorList>
            <person name="Wood V."/>
            <person name="Gwilliam R."/>
            <person name="Rajandream M.A."/>
            <person name="Lyne M.H."/>
            <person name="Lyne R."/>
            <person name="Stewart A."/>
            <person name="Sgouros J.G."/>
            <person name="Peat N."/>
            <person name="Hayles J."/>
            <person name="Baker S.G."/>
            <person name="Basham D."/>
            <person name="Bowman S."/>
            <person name="Brooks K."/>
            <person name="Brown D."/>
            <person name="Brown S."/>
            <person name="Chillingworth T."/>
            <person name="Churcher C.M."/>
            <person name="Collins M."/>
            <person name="Connor R."/>
            <person name="Cronin A."/>
            <person name="Davis P."/>
            <person name="Feltwell T."/>
            <person name="Fraser A."/>
            <person name="Gentles S."/>
            <person name="Goble A."/>
            <person name="Hamlin N."/>
            <person name="Harris D.E."/>
            <person name="Hidalgo J."/>
            <person name="Hodgson G."/>
            <person name="Holroyd S."/>
            <person name="Hornsby T."/>
            <person name="Howarth S."/>
            <person name="Huckle E.J."/>
            <person name="Hunt S."/>
            <person name="Jagels K."/>
            <person name="James K.D."/>
            <person name="Jones L."/>
            <person name="Jones M."/>
            <person name="Leather S."/>
            <person name="McDonald S."/>
            <person name="McLean J."/>
            <person name="Mooney P."/>
            <person name="Moule S."/>
            <person name="Mungall K.L."/>
            <person name="Murphy L.D."/>
            <person name="Niblett D."/>
            <person name="Odell C."/>
            <person name="Oliver K."/>
            <person name="O'Neil S."/>
            <person name="Pearson D."/>
            <person name="Quail M.A."/>
            <person name="Rabbinowitsch E."/>
            <person name="Rutherford K.M."/>
            <person name="Rutter S."/>
            <person name="Saunders D."/>
            <person name="Seeger K."/>
            <person name="Sharp S."/>
            <person name="Skelton J."/>
            <person name="Simmonds M.N."/>
            <person name="Squares R."/>
            <person name="Squares S."/>
            <person name="Stevens K."/>
            <person name="Taylor K."/>
            <person name="Taylor R.G."/>
            <person name="Tivey A."/>
            <person name="Walsh S.V."/>
            <person name="Warren T."/>
            <person name="Whitehead S."/>
            <person name="Woodward J.R."/>
            <person name="Volckaert G."/>
            <person name="Aert R."/>
            <person name="Robben J."/>
            <person name="Grymonprez B."/>
            <person name="Weltjens I."/>
            <person name="Vanstreels E."/>
            <person name="Rieger M."/>
            <person name="Schaefer M."/>
            <person name="Mueller-Auer S."/>
            <person name="Gabel C."/>
            <person name="Fuchs M."/>
            <person name="Duesterhoeft A."/>
            <person name="Fritzc C."/>
            <person name="Holzer E."/>
            <person name="Moestl D."/>
            <person name="Hilbert H."/>
            <person name="Borzym K."/>
            <person name="Langer I."/>
            <person name="Beck A."/>
            <person name="Lehrach H."/>
            <person name="Reinhardt R."/>
            <person name="Pohl T.M."/>
            <person name="Eger P."/>
            <person name="Zimmermann W."/>
            <person name="Wedler H."/>
            <person name="Wambutt R."/>
            <person name="Purnelle B."/>
            <person name="Goffeau A."/>
            <person name="Cadieu E."/>
            <person name="Dreano S."/>
            <person name="Gloux S."/>
            <person name="Lelaure V."/>
            <person name="Mottier S."/>
            <person name="Galibert F."/>
            <person name="Aves S.J."/>
            <person name="Xiang Z."/>
            <person name="Hunt C."/>
            <person name="Moore K."/>
            <person name="Hurst S.M."/>
            <person name="Lucas M."/>
            <person name="Rochet M."/>
            <person name="Gaillardin C."/>
            <person name="Tallada V.A."/>
            <person name="Garzon A."/>
            <person name="Thode G."/>
            <person name="Daga R.R."/>
            <person name="Cruzado L."/>
            <person name="Jimenez J."/>
            <person name="Sanchez M."/>
            <person name="del Rey F."/>
            <person name="Benito J."/>
            <person name="Dominguez A."/>
            <person name="Revuelta J.L."/>
            <person name="Moreno S."/>
            <person name="Armstrong J."/>
            <person name="Forsburg S.L."/>
            <person name="Cerutti L."/>
            <person name="Lowe T."/>
            <person name="McCombie W.R."/>
            <person name="Paulsen I."/>
            <person name="Potashkin J."/>
            <person name="Shpakovski G.V."/>
            <person name="Ussery D."/>
            <person name="Barrell B.G."/>
            <person name="Nurse P."/>
        </authorList>
    </citation>
    <scope>NUCLEOTIDE SEQUENCE [LARGE SCALE GENOMIC DNA]</scope>
    <source>
        <strain>972 / ATCC 24843</strain>
    </source>
</reference>
<reference key="2">
    <citation type="journal article" date="2006" name="Nat. Biotechnol.">
        <title>ORFeome cloning and global analysis of protein localization in the fission yeast Schizosaccharomyces pombe.</title>
        <authorList>
            <person name="Matsuyama A."/>
            <person name="Arai R."/>
            <person name="Yashiroda Y."/>
            <person name="Shirai A."/>
            <person name="Kamata A."/>
            <person name="Sekido S."/>
            <person name="Kobayashi Y."/>
            <person name="Hashimoto A."/>
            <person name="Hamamoto M."/>
            <person name="Hiraoka Y."/>
            <person name="Horinouchi S."/>
            <person name="Yoshida M."/>
        </authorList>
    </citation>
    <scope>SUBCELLULAR LOCATION [LARGE SCALE ANALYSIS]</scope>
</reference>
<dbReference type="EMBL" id="CU329672">
    <property type="protein sequence ID" value="CAA21859.1"/>
    <property type="molecule type" value="Genomic_DNA"/>
</dbReference>
<dbReference type="PIR" id="T41483">
    <property type="entry name" value="T41483"/>
</dbReference>
<dbReference type="RefSeq" id="NP_588175.1">
    <property type="nucleotide sequence ID" value="NM_001023165.2"/>
</dbReference>
<dbReference type="BioGRID" id="275869">
    <property type="interactions" value="14"/>
</dbReference>
<dbReference type="iPTMnet" id="O94593"/>
<dbReference type="PaxDb" id="4896-SPCC622.03c.1"/>
<dbReference type="EnsemblFungi" id="SPCC622.03c.1">
    <property type="protein sequence ID" value="SPCC622.03c.1:pep"/>
    <property type="gene ID" value="SPCC622.03c"/>
</dbReference>
<dbReference type="KEGG" id="spo:2539301"/>
<dbReference type="PomBase" id="SPCC622.03c"/>
<dbReference type="VEuPathDB" id="FungiDB:SPCC622.03c"/>
<dbReference type="HOGENOM" id="CLU_2028089_0_0_1"/>
<dbReference type="InParanoid" id="O94593"/>
<dbReference type="PRO" id="PR:O94593"/>
<dbReference type="Proteomes" id="UP000002485">
    <property type="component" value="Chromosome III"/>
</dbReference>
<dbReference type="GO" id="GO:0005737">
    <property type="term" value="C:cytoplasm"/>
    <property type="evidence" value="ECO:0007005"/>
    <property type="project" value="PomBase"/>
</dbReference>
<dbReference type="GO" id="GO:0016020">
    <property type="term" value="C:membrane"/>
    <property type="evidence" value="ECO:0007669"/>
    <property type="project" value="UniProtKB-SubCell"/>
</dbReference>
<proteinExistence type="predicted"/>
<name>YC83_SCHPO</name>
<accession>O94593</accession>
<comment type="subcellular location">
    <subcellularLocation>
        <location evidence="2">Cytoplasm</location>
    </subcellularLocation>
    <subcellularLocation>
        <location evidence="3">Membrane</location>
        <topology evidence="3">Multi-pass membrane protein</topology>
    </subcellularLocation>
</comment>
<organism>
    <name type="scientific">Schizosaccharomyces pombe (strain 972 / ATCC 24843)</name>
    <name type="common">Fission yeast</name>
    <dbReference type="NCBI Taxonomy" id="284812"/>
    <lineage>
        <taxon>Eukaryota</taxon>
        <taxon>Fungi</taxon>
        <taxon>Dikarya</taxon>
        <taxon>Ascomycota</taxon>
        <taxon>Taphrinomycotina</taxon>
        <taxon>Schizosaccharomycetes</taxon>
        <taxon>Schizosaccharomycetales</taxon>
        <taxon>Schizosaccharomycetaceae</taxon>
        <taxon>Schizosaccharomyces</taxon>
    </lineage>
</organism>
<gene>
    <name type="ORF">SPCC622.03c</name>
</gene>
<evidence type="ECO:0000255" key="1"/>
<evidence type="ECO:0000269" key="2">
    <source>
    </source>
</evidence>
<evidence type="ECO:0000305" key="3"/>
<keyword id="KW-0963">Cytoplasm</keyword>
<keyword id="KW-0472">Membrane</keyword>
<keyword id="KW-1185">Reference proteome</keyword>
<keyword id="KW-0812">Transmembrane</keyword>
<keyword id="KW-1133">Transmembrane helix</keyword>
<feature type="chain" id="PRO_0000303978" description="Putative uncharacterized membrane protein C622.03c">
    <location>
        <begin position="1"/>
        <end position="132"/>
    </location>
</feature>
<feature type="transmembrane region" description="Helical" evidence="1">
    <location>
        <begin position="44"/>
        <end position="64"/>
    </location>
</feature>
<feature type="transmembrane region" description="Helical" evidence="1">
    <location>
        <begin position="75"/>
        <end position="95"/>
    </location>
</feature>